<dbReference type="EC" id="6.5.1.7" evidence="6"/>
<dbReference type="EMBL" id="BA000002">
    <property type="protein sequence ID" value="BAA80079.2"/>
    <property type="molecule type" value="Genomic_DNA"/>
</dbReference>
<dbReference type="PIR" id="G72709">
    <property type="entry name" value="G72709"/>
</dbReference>
<dbReference type="RefSeq" id="WP_010866170.1">
    <property type="nucleotide sequence ID" value="NC_000854.2"/>
</dbReference>
<dbReference type="SMR" id="Q9YD18"/>
<dbReference type="STRING" id="272557.APE_1094.1"/>
<dbReference type="EnsemblBacteria" id="BAA80079">
    <property type="protein sequence ID" value="BAA80079"/>
    <property type="gene ID" value="APE_1094.1"/>
</dbReference>
<dbReference type="GeneID" id="1445787"/>
<dbReference type="KEGG" id="ape:APE_1094.1"/>
<dbReference type="PATRIC" id="fig|272557.25.peg.768"/>
<dbReference type="eggNOG" id="arCOG01347">
    <property type="taxonomic scope" value="Archaea"/>
</dbReference>
<dbReference type="BRENDA" id="6.5.1.1">
    <property type="organism ID" value="171"/>
</dbReference>
<dbReference type="Proteomes" id="UP000002518">
    <property type="component" value="Chromosome"/>
</dbReference>
<dbReference type="GO" id="GO:0005524">
    <property type="term" value="F:ATP binding"/>
    <property type="evidence" value="ECO:0007669"/>
    <property type="project" value="UniProtKB-UniRule"/>
</dbReference>
<dbReference type="GO" id="GO:0003677">
    <property type="term" value="F:DNA binding"/>
    <property type="evidence" value="ECO:0007669"/>
    <property type="project" value="InterPro"/>
</dbReference>
<dbReference type="GO" id="GO:0003910">
    <property type="term" value="F:DNA ligase (ATP) activity"/>
    <property type="evidence" value="ECO:0007669"/>
    <property type="project" value="UniProtKB-UniRule"/>
</dbReference>
<dbReference type="GO" id="GO:0046872">
    <property type="term" value="F:metal ion binding"/>
    <property type="evidence" value="ECO:0007669"/>
    <property type="project" value="UniProtKB-KW"/>
</dbReference>
<dbReference type="GO" id="GO:0051301">
    <property type="term" value="P:cell division"/>
    <property type="evidence" value="ECO:0007669"/>
    <property type="project" value="UniProtKB-KW"/>
</dbReference>
<dbReference type="GO" id="GO:0071897">
    <property type="term" value="P:DNA biosynthetic process"/>
    <property type="evidence" value="ECO:0007669"/>
    <property type="project" value="InterPro"/>
</dbReference>
<dbReference type="GO" id="GO:0006310">
    <property type="term" value="P:DNA recombination"/>
    <property type="evidence" value="ECO:0007669"/>
    <property type="project" value="UniProtKB-UniRule"/>
</dbReference>
<dbReference type="GO" id="GO:0006281">
    <property type="term" value="P:DNA repair"/>
    <property type="evidence" value="ECO:0007669"/>
    <property type="project" value="UniProtKB-UniRule"/>
</dbReference>
<dbReference type="GO" id="GO:0006273">
    <property type="term" value="P:lagging strand elongation"/>
    <property type="evidence" value="ECO:0007669"/>
    <property type="project" value="TreeGrafter"/>
</dbReference>
<dbReference type="CDD" id="cd07901">
    <property type="entry name" value="Adenylation_DNA_ligase_Arch_LigB"/>
    <property type="match status" value="1"/>
</dbReference>
<dbReference type="CDD" id="cd07969">
    <property type="entry name" value="OBF_DNA_ligase_I"/>
    <property type="match status" value="1"/>
</dbReference>
<dbReference type="FunFam" id="1.10.3260.10:FF:000007">
    <property type="entry name" value="DNA ligase"/>
    <property type="match status" value="1"/>
</dbReference>
<dbReference type="FunFam" id="2.40.50.140:FF:000062">
    <property type="entry name" value="DNA ligase"/>
    <property type="match status" value="1"/>
</dbReference>
<dbReference type="FunFam" id="3.30.470.30:FF:000012">
    <property type="entry name" value="Probable DNA ligase"/>
    <property type="match status" value="1"/>
</dbReference>
<dbReference type="Gene3D" id="1.10.3260.10">
    <property type="entry name" value="DNA ligase, ATP-dependent, N-terminal domain"/>
    <property type="match status" value="1"/>
</dbReference>
<dbReference type="Gene3D" id="3.30.470.30">
    <property type="entry name" value="DNA ligase/mRNA capping enzyme"/>
    <property type="match status" value="1"/>
</dbReference>
<dbReference type="Gene3D" id="2.40.50.140">
    <property type="entry name" value="Nucleic acid-binding proteins"/>
    <property type="match status" value="1"/>
</dbReference>
<dbReference type="HAMAP" id="MF_00407">
    <property type="entry name" value="DNA_ligase"/>
    <property type="match status" value="1"/>
</dbReference>
<dbReference type="InterPro" id="IPR050191">
    <property type="entry name" value="ATP-dep_DNA_ligase"/>
</dbReference>
<dbReference type="InterPro" id="IPR022865">
    <property type="entry name" value="DNA_ligae_ATP-dep_bac/arc"/>
</dbReference>
<dbReference type="InterPro" id="IPR000977">
    <property type="entry name" value="DNA_ligase_ATP-dep"/>
</dbReference>
<dbReference type="InterPro" id="IPR012309">
    <property type="entry name" value="DNA_ligase_ATP-dep_C"/>
</dbReference>
<dbReference type="InterPro" id="IPR012310">
    <property type="entry name" value="DNA_ligase_ATP-dep_cent"/>
</dbReference>
<dbReference type="InterPro" id="IPR016059">
    <property type="entry name" value="DNA_ligase_ATP-dep_CS"/>
</dbReference>
<dbReference type="InterPro" id="IPR012308">
    <property type="entry name" value="DNA_ligase_ATP-dep_N"/>
</dbReference>
<dbReference type="InterPro" id="IPR036599">
    <property type="entry name" value="DNA_ligase_N_sf"/>
</dbReference>
<dbReference type="InterPro" id="IPR012340">
    <property type="entry name" value="NA-bd_OB-fold"/>
</dbReference>
<dbReference type="NCBIfam" id="TIGR00574">
    <property type="entry name" value="dnl1"/>
    <property type="match status" value="1"/>
</dbReference>
<dbReference type="PANTHER" id="PTHR45674:SF4">
    <property type="entry name" value="DNA LIGASE 1"/>
    <property type="match status" value="1"/>
</dbReference>
<dbReference type="PANTHER" id="PTHR45674">
    <property type="entry name" value="DNA LIGASE 1/3 FAMILY MEMBER"/>
    <property type="match status" value="1"/>
</dbReference>
<dbReference type="Pfam" id="PF04679">
    <property type="entry name" value="DNA_ligase_A_C"/>
    <property type="match status" value="1"/>
</dbReference>
<dbReference type="Pfam" id="PF01068">
    <property type="entry name" value="DNA_ligase_A_M"/>
    <property type="match status" value="1"/>
</dbReference>
<dbReference type="Pfam" id="PF04675">
    <property type="entry name" value="DNA_ligase_A_N"/>
    <property type="match status" value="1"/>
</dbReference>
<dbReference type="SUPFAM" id="SSF117018">
    <property type="entry name" value="ATP-dependent DNA ligase DNA-binding domain"/>
    <property type="match status" value="1"/>
</dbReference>
<dbReference type="SUPFAM" id="SSF56091">
    <property type="entry name" value="DNA ligase/mRNA capping enzyme, catalytic domain"/>
    <property type="match status" value="1"/>
</dbReference>
<dbReference type="SUPFAM" id="SSF50249">
    <property type="entry name" value="Nucleic acid-binding proteins"/>
    <property type="match status" value="1"/>
</dbReference>
<dbReference type="PROSITE" id="PS00697">
    <property type="entry name" value="DNA_LIGASE_A1"/>
    <property type="match status" value="1"/>
</dbReference>
<dbReference type="PROSITE" id="PS00333">
    <property type="entry name" value="DNA_LIGASE_A2"/>
    <property type="match status" value="1"/>
</dbReference>
<dbReference type="PROSITE" id="PS50160">
    <property type="entry name" value="DNA_LIGASE_A3"/>
    <property type="match status" value="1"/>
</dbReference>
<feature type="chain" id="PRO_0000059600" description="DNA ligase">
    <location>
        <begin position="1"/>
        <end position="602"/>
    </location>
</feature>
<feature type="active site" description="N6-AMP-lysine intermediate" evidence="2">
    <location>
        <position position="264"/>
    </location>
</feature>
<feature type="binding site" evidence="2">
    <location>
        <position position="262"/>
    </location>
    <ligand>
        <name>ATP</name>
        <dbReference type="ChEBI" id="CHEBI:30616"/>
    </ligand>
</feature>
<feature type="binding site" evidence="2">
    <location>
        <position position="269"/>
    </location>
    <ligand>
        <name>ATP</name>
        <dbReference type="ChEBI" id="CHEBI:30616"/>
    </ligand>
</feature>
<feature type="binding site" evidence="2">
    <location>
        <position position="284"/>
    </location>
    <ligand>
        <name>ATP</name>
        <dbReference type="ChEBI" id="CHEBI:30616"/>
    </ligand>
</feature>
<feature type="binding site" evidence="2">
    <location>
        <position position="314"/>
    </location>
    <ligand>
        <name>ATP</name>
        <dbReference type="ChEBI" id="CHEBI:30616"/>
    </ligand>
</feature>
<feature type="binding site" evidence="2">
    <location>
        <position position="354"/>
    </location>
    <ligand>
        <name>ATP</name>
        <dbReference type="ChEBI" id="CHEBI:30616"/>
    </ligand>
</feature>
<feature type="binding site" evidence="2">
    <location>
        <position position="431"/>
    </location>
    <ligand>
        <name>ATP</name>
        <dbReference type="ChEBI" id="CHEBI:30616"/>
    </ligand>
</feature>
<feature type="binding site" evidence="2">
    <location>
        <position position="437"/>
    </location>
    <ligand>
        <name>ATP</name>
        <dbReference type="ChEBI" id="CHEBI:30616"/>
    </ligand>
</feature>
<reference key="1">
    <citation type="journal article" date="1999" name="DNA Res.">
        <title>Complete genome sequence of an aerobic hyper-thermophilic crenarchaeon, Aeropyrum pernix K1.</title>
        <authorList>
            <person name="Kawarabayasi Y."/>
            <person name="Hino Y."/>
            <person name="Horikawa H."/>
            <person name="Yamazaki S."/>
            <person name="Haikawa Y."/>
            <person name="Jin-no K."/>
            <person name="Takahashi M."/>
            <person name="Sekine M."/>
            <person name="Baba S."/>
            <person name="Ankai A."/>
            <person name="Kosugi H."/>
            <person name="Hosoyama A."/>
            <person name="Fukui S."/>
            <person name="Nagai Y."/>
            <person name="Nishijima K."/>
            <person name="Nakazawa H."/>
            <person name="Takamiya M."/>
            <person name="Masuda S."/>
            <person name="Funahashi T."/>
            <person name="Tanaka T."/>
            <person name="Kudoh Y."/>
            <person name="Yamazaki J."/>
            <person name="Kushida N."/>
            <person name="Oguchi A."/>
            <person name="Aoki K."/>
            <person name="Kubota K."/>
            <person name="Nakamura Y."/>
            <person name="Nomura N."/>
            <person name="Sako Y."/>
            <person name="Kikuchi H."/>
        </authorList>
    </citation>
    <scope>NUCLEOTIDE SEQUENCE [LARGE SCALE GENOMIC DNA]</scope>
    <source>
        <strain>ATCC 700893 / DSM 11879 / JCM 9820 / NBRC 100138 / K1</strain>
    </source>
</reference>
<reference key="2">
    <citation type="journal article" date="2003" name="FEBS Lett.">
        <title>A novel ADP-dependent DNA ligase from Aeropyrum pernix K1.</title>
        <authorList>
            <person name="Jeon S.J."/>
            <person name="Ishikawa K."/>
        </authorList>
    </citation>
    <scope>FUNCTION</scope>
    <scope>CATALYTIC ACTIVITY</scope>
    <scope>COFACTOR</scope>
    <scope>ACTIVITY REGULATION</scope>
    <scope>BIOPHYSICOCHEMICAL PROPERTIES</scope>
    <scope>SUBUNIT</scope>
    <source>
        <strain>ATCC 700893 / DSM 11879 / JCM 9820 / NBRC 100138 / K1</strain>
    </source>
</reference>
<accession>Q9YD18</accession>
<comment type="function">
    <text evidence="3">DNA ligase that seals nicks in double-stranded DNA during DNA replication, DNA recombination and DNA repair. Can also use ADP, but not NAD(+).</text>
</comment>
<comment type="catalytic activity">
    <reaction evidence="2 3">
        <text>ATP + (deoxyribonucleotide)n-3'-hydroxyl + 5'-phospho-(deoxyribonucleotide)m = (deoxyribonucleotide)n+m + AMP + diphosphate.</text>
        <dbReference type="EC" id="6.5.1.7"/>
    </reaction>
</comment>
<comment type="catalytic activity">
    <reaction evidence="3">
        <text>ADP + (deoxyribonucleotide)n-3'-hydroxyl + 5'-phospho-(deoxyribonucleotide)m = (deoxyribonucleotide)n+m + AMP + phosphate.</text>
        <dbReference type="EC" id="6.5.1.7"/>
    </reaction>
</comment>
<comment type="catalytic activity">
    <reaction evidence="1">
        <text>GTP + (deoxyribonucleotide)n-3'-hydroxyl + 5'-phospho-(deoxyribonucleotide)m = (deoxyribonucleotide)n+m + GMP + diphosphate.</text>
        <dbReference type="EC" id="6.5.1.7"/>
    </reaction>
</comment>
<comment type="cofactor">
    <cofactor evidence="3">
        <name>Mg(2+)</name>
        <dbReference type="ChEBI" id="CHEBI:18420"/>
    </cofactor>
    <cofactor evidence="3">
        <name>Mn(2+)</name>
        <dbReference type="ChEBI" id="CHEBI:29035"/>
    </cofactor>
    <text evidence="3">Less active with Ca(2+) or Co(2+). Not active with Cu(2+), Zn(2+), Sr(2+) or Ni(2+).</text>
</comment>
<comment type="activity regulation">
    <text evidence="3">Inhibited in the presence of 100 mM KCl, NaCl or NH(4)Cl.</text>
</comment>
<comment type="biophysicochemical properties">
    <phDependence>
        <text evidence="3">Optimum pH is 7.5.</text>
    </phDependence>
    <temperatureDependence>
        <text evidence="3">Optimum temperature is 70 degrees Celsius.</text>
    </temperatureDependence>
</comment>
<comment type="subunit">
    <text evidence="3">Monomer.</text>
</comment>
<comment type="similarity">
    <text evidence="2 5">Belongs to the ATP-dependent DNA ligase family.</text>
</comment>
<sequence length="602" mass="67748">MPFKPVAEAFASMERITSRTQLTLLLTRLFKSTPPGAIGIVVYLIQGKLGPDWKGLPELGVGEKLLVKAIALAYKATEERVERLYKSVGDLGSVAERLSREYRSRAARAVTLEAFMAGGGEALTVRRVYNTLYRIAMAQGEGSRDIKLRLLAGLLADAEPVEAKYIVRFVEGRLRVGVGDATVLDALAMAFGGGAHARPVIERAYNLRADLGYIAEVVAREGVDALRGVKPQVGVPIRPMLAERGRDPAEILRKVGGRAVVEYKYDGERAQIHKKDGEVYIYSRRLENITRMFPDVVEMARKGLKAGEAIVEGEIVAVDPDNYEIQPFQVLMQRKRKHDIHRVMREVPVAVFLFDALYVDGEDLTSKPLPERRRRLKEIVVETPLWRLAESIETSDPEELWTFFLKAIEEGAEGVMVKAVHRDSVYTAGVRGWLWVKLKRDYKSEMMDTVDLVVVGAFYGRGKRGGKLSSLLMAAYDPDRDVFPTVCKVATGFTDEELDRMNEMLKKHIIPRKHPRVESRIEPDVWVEPALVAEILGAELTLSPMHTCCLNTVRPGVGISIRFPRFIRWRDDKSPEDATTTHELLEMYKRQLRRVEEPAEQV</sequence>
<gene>
    <name evidence="2" type="primary">lig</name>
    <name type="ordered locus">APE_1094.1</name>
</gene>
<organism>
    <name type="scientific">Aeropyrum pernix (strain ATCC 700893 / DSM 11879 / JCM 9820 / NBRC 100138 / K1)</name>
    <dbReference type="NCBI Taxonomy" id="272557"/>
    <lineage>
        <taxon>Archaea</taxon>
        <taxon>Thermoproteota</taxon>
        <taxon>Thermoprotei</taxon>
        <taxon>Desulfurococcales</taxon>
        <taxon>Desulfurococcaceae</taxon>
        <taxon>Aeropyrum</taxon>
    </lineage>
</organism>
<proteinExistence type="evidence at protein level"/>
<evidence type="ECO:0000250" key="1">
    <source>
        <dbReference type="UniProtKB" id="A2BJX6"/>
    </source>
</evidence>
<evidence type="ECO:0000255" key="2">
    <source>
        <dbReference type="HAMAP-Rule" id="MF_00407"/>
    </source>
</evidence>
<evidence type="ECO:0000269" key="3">
    <source>
    </source>
</evidence>
<evidence type="ECO:0000303" key="4">
    <source>
    </source>
</evidence>
<evidence type="ECO:0000305" key="5"/>
<evidence type="ECO:0000305" key="6">
    <source>
    </source>
</evidence>
<name>DNLI_AERPE</name>
<keyword id="KW-0067">ATP-binding</keyword>
<keyword id="KW-0131">Cell cycle</keyword>
<keyword id="KW-0132">Cell division</keyword>
<keyword id="KW-0227">DNA damage</keyword>
<keyword id="KW-0233">DNA recombination</keyword>
<keyword id="KW-0234">DNA repair</keyword>
<keyword id="KW-0235">DNA replication</keyword>
<keyword id="KW-0436">Ligase</keyword>
<keyword id="KW-0460">Magnesium</keyword>
<keyword id="KW-0464">Manganese</keyword>
<keyword id="KW-0479">Metal-binding</keyword>
<keyword id="KW-0547">Nucleotide-binding</keyword>
<keyword id="KW-1185">Reference proteome</keyword>
<protein>
    <recommendedName>
        <fullName evidence="2 4">DNA ligase</fullName>
        <ecNumber evidence="6">6.5.1.7</ecNumber>
    </recommendedName>
    <alternativeName>
        <fullName evidence="5">Polydeoxyribonucleotide synthase [ATP/ADP]</fullName>
    </alternativeName>
</protein>